<proteinExistence type="inferred from homology"/>
<comment type="function">
    <text evidence="1">Key enzyme in the regulation of glycerol uptake and metabolism. Catalyzes the phosphorylation of glycerol to yield sn-glycerol 3-phosphate.</text>
</comment>
<comment type="catalytic activity">
    <reaction evidence="1">
        <text>glycerol + ATP = sn-glycerol 3-phosphate + ADP + H(+)</text>
        <dbReference type="Rhea" id="RHEA:21644"/>
        <dbReference type="ChEBI" id="CHEBI:15378"/>
        <dbReference type="ChEBI" id="CHEBI:17754"/>
        <dbReference type="ChEBI" id="CHEBI:30616"/>
        <dbReference type="ChEBI" id="CHEBI:57597"/>
        <dbReference type="ChEBI" id="CHEBI:456216"/>
        <dbReference type="EC" id="2.7.1.30"/>
    </reaction>
</comment>
<comment type="activity regulation">
    <text evidence="1">Activity of this regulatory enzyme is affected by several metabolites. Allosterically and non-competitively inhibited by fructose 1,6-bisphosphate (FBP) and unphosphorylated phosphocarrier protein EIIA-Glc (III-Glc), an integral component of the bacterial phosphotransferase (PTS) system.</text>
</comment>
<comment type="pathway">
    <text evidence="1">Polyol metabolism; glycerol degradation via glycerol kinase pathway; sn-glycerol 3-phosphate from glycerol: step 1/1.</text>
</comment>
<comment type="subunit">
    <text evidence="1">Homotetramer and homodimer (in equilibrium). Heterodimer with EIIA-Glc. Binds 1 zinc ion per glycerol kinase EIIA-Glc dimer. The zinc ion is important for dimerization.</text>
</comment>
<comment type="similarity">
    <text evidence="1">Belongs to the FGGY kinase family.</text>
</comment>
<keyword id="KW-0021">Allosteric enzyme</keyword>
<keyword id="KW-0067">ATP-binding</keyword>
<keyword id="KW-0319">Glycerol metabolism</keyword>
<keyword id="KW-0418">Kinase</keyword>
<keyword id="KW-0479">Metal-binding</keyword>
<keyword id="KW-0547">Nucleotide-binding</keyword>
<keyword id="KW-0808">Transferase</keyword>
<keyword id="KW-0862">Zinc</keyword>
<accession>B5BJK3</accession>
<name>GLPK_SALPK</name>
<evidence type="ECO:0000255" key="1">
    <source>
        <dbReference type="HAMAP-Rule" id="MF_00186"/>
    </source>
</evidence>
<feature type="chain" id="PRO_1000098760" description="Glycerol kinase">
    <location>
        <begin position="1"/>
        <end position="502"/>
    </location>
</feature>
<feature type="binding site" evidence="1">
    <location>
        <position position="14"/>
    </location>
    <ligand>
        <name>ADP</name>
        <dbReference type="ChEBI" id="CHEBI:456216"/>
    </ligand>
</feature>
<feature type="binding site" evidence="1">
    <location>
        <position position="14"/>
    </location>
    <ligand>
        <name>ATP</name>
        <dbReference type="ChEBI" id="CHEBI:30616"/>
    </ligand>
</feature>
<feature type="binding site" evidence="1">
    <location>
        <position position="14"/>
    </location>
    <ligand>
        <name>sn-glycerol 3-phosphate</name>
        <dbReference type="ChEBI" id="CHEBI:57597"/>
    </ligand>
</feature>
<feature type="binding site" evidence="1">
    <location>
        <position position="15"/>
    </location>
    <ligand>
        <name>ATP</name>
        <dbReference type="ChEBI" id="CHEBI:30616"/>
    </ligand>
</feature>
<feature type="binding site" evidence="1">
    <location>
        <position position="16"/>
    </location>
    <ligand>
        <name>ATP</name>
        <dbReference type="ChEBI" id="CHEBI:30616"/>
    </ligand>
</feature>
<feature type="binding site" evidence="1">
    <location>
        <position position="18"/>
    </location>
    <ligand>
        <name>ADP</name>
        <dbReference type="ChEBI" id="CHEBI:456216"/>
    </ligand>
</feature>
<feature type="binding site" evidence="1">
    <location>
        <position position="84"/>
    </location>
    <ligand>
        <name>glycerol</name>
        <dbReference type="ChEBI" id="CHEBI:17754"/>
    </ligand>
</feature>
<feature type="binding site" evidence="1">
    <location>
        <position position="84"/>
    </location>
    <ligand>
        <name>sn-glycerol 3-phosphate</name>
        <dbReference type="ChEBI" id="CHEBI:57597"/>
    </ligand>
</feature>
<feature type="binding site" evidence="1">
    <location>
        <position position="85"/>
    </location>
    <ligand>
        <name>glycerol</name>
        <dbReference type="ChEBI" id="CHEBI:17754"/>
    </ligand>
</feature>
<feature type="binding site" evidence="1">
    <location>
        <position position="85"/>
    </location>
    <ligand>
        <name>sn-glycerol 3-phosphate</name>
        <dbReference type="ChEBI" id="CHEBI:57597"/>
    </ligand>
</feature>
<feature type="binding site" evidence="1">
    <location>
        <position position="136"/>
    </location>
    <ligand>
        <name>glycerol</name>
        <dbReference type="ChEBI" id="CHEBI:17754"/>
    </ligand>
</feature>
<feature type="binding site" evidence="1">
    <location>
        <position position="136"/>
    </location>
    <ligand>
        <name>sn-glycerol 3-phosphate</name>
        <dbReference type="ChEBI" id="CHEBI:57597"/>
    </ligand>
</feature>
<feature type="binding site" evidence="1">
    <location>
        <position position="246"/>
    </location>
    <ligand>
        <name>glycerol</name>
        <dbReference type="ChEBI" id="CHEBI:17754"/>
    </ligand>
</feature>
<feature type="binding site" evidence="1">
    <location>
        <position position="246"/>
    </location>
    <ligand>
        <name>sn-glycerol 3-phosphate</name>
        <dbReference type="ChEBI" id="CHEBI:57597"/>
    </ligand>
</feature>
<feature type="binding site" evidence="1">
    <location>
        <position position="247"/>
    </location>
    <ligand>
        <name>glycerol</name>
        <dbReference type="ChEBI" id="CHEBI:17754"/>
    </ligand>
</feature>
<feature type="binding site" evidence="1">
    <location>
        <position position="268"/>
    </location>
    <ligand>
        <name>ADP</name>
        <dbReference type="ChEBI" id="CHEBI:456216"/>
    </ligand>
</feature>
<feature type="binding site" evidence="1">
    <location>
        <position position="268"/>
    </location>
    <ligand>
        <name>ATP</name>
        <dbReference type="ChEBI" id="CHEBI:30616"/>
    </ligand>
</feature>
<feature type="binding site" evidence="1">
    <location>
        <position position="311"/>
    </location>
    <ligand>
        <name>ADP</name>
        <dbReference type="ChEBI" id="CHEBI:456216"/>
    </ligand>
</feature>
<feature type="binding site" evidence="1">
    <location>
        <position position="311"/>
    </location>
    <ligand>
        <name>ATP</name>
        <dbReference type="ChEBI" id="CHEBI:30616"/>
    </ligand>
</feature>
<feature type="binding site" evidence="1">
    <location>
        <position position="315"/>
    </location>
    <ligand>
        <name>ATP</name>
        <dbReference type="ChEBI" id="CHEBI:30616"/>
    </ligand>
</feature>
<feature type="binding site" evidence="1">
    <location>
        <position position="412"/>
    </location>
    <ligand>
        <name>ADP</name>
        <dbReference type="ChEBI" id="CHEBI:456216"/>
    </ligand>
</feature>
<feature type="binding site" evidence="1">
    <location>
        <position position="412"/>
    </location>
    <ligand>
        <name>ATP</name>
        <dbReference type="ChEBI" id="CHEBI:30616"/>
    </ligand>
</feature>
<feature type="binding site" evidence="1">
    <location>
        <position position="416"/>
    </location>
    <ligand>
        <name>ADP</name>
        <dbReference type="ChEBI" id="CHEBI:456216"/>
    </ligand>
</feature>
<sequence>MTEKKYIVALDQGTTSSRAVVMDHDANIVSVSQREFEQIYPKPGWVEHDPMEIWASQSSTLVEVLAKADISSDQIAAIGITNQRETAIVWERETGKPIYNAIVWQCRRTADICEQLKRDGLEDYIRDNTGLVVDPYFSGTKVKWILDHVEGSRERAKRGELLFGTVDTWLIWKMTQGRVHVTDYTNASRTMLFNIHDLDWDDKMLDVLDIPRAMLPQVRKSSEVYGQTNIGGKGGTRIPIAGIAGDQQAALFGQLCVKEGMAKNTYGTGCFMLMNTGEKAVKSENGLLTTIACGPSGEVNYALEGAVFMAGASIQWLRDEMKLISDAFDSEYFATKVKDTNGVYVVPAFTGLGAPYWDPYARGAIFGLTRGVNSNHIIRATLESIAYQTRDVLEAMQADSGIRLHALRVDGGAVANNFLMQFQSDILGTRVERPEVREVTALGAAYLAGLAVGYWQNLDELQEKAVIEREFRPGIETTERNYRYSGWKKAVKRAMAWEEHDK</sequence>
<reference key="1">
    <citation type="journal article" date="2009" name="BMC Genomics">
        <title>Pseudogene accumulation in the evolutionary histories of Salmonella enterica serovars Paratyphi A and Typhi.</title>
        <authorList>
            <person name="Holt K.E."/>
            <person name="Thomson N.R."/>
            <person name="Wain J."/>
            <person name="Langridge G.C."/>
            <person name="Hasan R."/>
            <person name="Bhutta Z.A."/>
            <person name="Quail M.A."/>
            <person name="Norbertczak H."/>
            <person name="Walker D."/>
            <person name="Simmonds M."/>
            <person name="White B."/>
            <person name="Bason N."/>
            <person name="Mungall K."/>
            <person name="Dougan G."/>
            <person name="Parkhill J."/>
        </authorList>
    </citation>
    <scope>NUCLEOTIDE SEQUENCE [LARGE SCALE GENOMIC DNA]</scope>
    <source>
        <strain>AKU_12601</strain>
    </source>
</reference>
<gene>
    <name evidence="1" type="primary">glpK</name>
    <name type="ordered locus">SSPA3656</name>
</gene>
<protein>
    <recommendedName>
        <fullName evidence="1">Glycerol kinase</fullName>
        <ecNumber evidence="1">2.7.1.30</ecNumber>
    </recommendedName>
    <alternativeName>
        <fullName evidence="1">ATP:glycerol 3-phosphotransferase</fullName>
    </alternativeName>
    <alternativeName>
        <fullName evidence="1">Glycerokinase</fullName>
        <shortName evidence="1">GK</shortName>
    </alternativeName>
</protein>
<organism>
    <name type="scientific">Salmonella paratyphi A (strain AKU_12601)</name>
    <dbReference type="NCBI Taxonomy" id="554290"/>
    <lineage>
        <taxon>Bacteria</taxon>
        <taxon>Pseudomonadati</taxon>
        <taxon>Pseudomonadota</taxon>
        <taxon>Gammaproteobacteria</taxon>
        <taxon>Enterobacterales</taxon>
        <taxon>Enterobacteriaceae</taxon>
        <taxon>Salmonella</taxon>
    </lineage>
</organism>
<dbReference type="EC" id="2.7.1.30" evidence="1"/>
<dbReference type="EMBL" id="FM200053">
    <property type="protein sequence ID" value="CAR61938.1"/>
    <property type="molecule type" value="Genomic_DNA"/>
</dbReference>
<dbReference type="RefSeq" id="WP_000136809.1">
    <property type="nucleotide sequence ID" value="NC_011147.1"/>
</dbReference>
<dbReference type="SMR" id="B5BJK3"/>
<dbReference type="KEGG" id="sek:SSPA3656"/>
<dbReference type="HOGENOM" id="CLU_009281_2_3_6"/>
<dbReference type="UniPathway" id="UPA00618">
    <property type="reaction ID" value="UER00672"/>
</dbReference>
<dbReference type="Proteomes" id="UP000001869">
    <property type="component" value="Chromosome"/>
</dbReference>
<dbReference type="GO" id="GO:0005829">
    <property type="term" value="C:cytosol"/>
    <property type="evidence" value="ECO:0007669"/>
    <property type="project" value="TreeGrafter"/>
</dbReference>
<dbReference type="GO" id="GO:0005524">
    <property type="term" value="F:ATP binding"/>
    <property type="evidence" value="ECO:0007669"/>
    <property type="project" value="UniProtKB-UniRule"/>
</dbReference>
<dbReference type="GO" id="GO:0004370">
    <property type="term" value="F:glycerol kinase activity"/>
    <property type="evidence" value="ECO:0000250"/>
    <property type="project" value="UniProtKB"/>
</dbReference>
<dbReference type="GO" id="GO:0046872">
    <property type="term" value="F:metal ion binding"/>
    <property type="evidence" value="ECO:0007669"/>
    <property type="project" value="UniProtKB-KW"/>
</dbReference>
<dbReference type="GO" id="GO:0019563">
    <property type="term" value="P:glycerol catabolic process"/>
    <property type="evidence" value="ECO:0007669"/>
    <property type="project" value="UniProtKB-UniRule"/>
</dbReference>
<dbReference type="GO" id="GO:0006071">
    <property type="term" value="P:glycerol metabolic process"/>
    <property type="evidence" value="ECO:0000250"/>
    <property type="project" value="UniProtKB"/>
</dbReference>
<dbReference type="GO" id="GO:0006072">
    <property type="term" value="P:glycerol-3-phosphate metabolic process"/>
    <property type="evidence" value="ECO:0007669"/>
    <property type="project" value="InterPro"/>
</dbReference>
<dbReference type="CDD" id="cd07786">
    <property type="entry name" value="FGGY_EcGK_like"/>
    <property type="match status" value="1"/>
</dbReference>
<dbReference type="FunFam" id="3.30.420.40:FF:000007">
    <property type="entry name" value="Glycerol kinase"/>
    <property type="match status" value="1"/>
</dbReference>
<dbReference type="FunFam" id="3.30.420.40:FF:000008">
    <property type="entry name" value="Glycerol kinase"/>
    <property type="match status" value="1"/>
</dbReference>
<dbReference type="Gene3D" id="3.30.420.40">
    <property type="match status" value="2"/>
</dbReference>
<dbReference type="HAMAP" id="MF_00186">
    <property type="entry name" value="Glycerol_kin"/>
    <property type="match status" value="1"/>
</dbReference>
<dbReference type="InterPro" id="IPR043129">
    <property type="entry name" value="ATPase_NBD"/>
</dbReference>
<dbReference type="InterPro" id="IPR000577">
    <property type="entry name" value="Carb_kinase_FGGY"/>
</dbReference>
<dbReference type="InterPro" id="IPR018483">
    <property type="entry name" value="Carb_kinase_FGGY_CS"/>
</dbReference>
<dbReference type="InterPro" id="IPR018485">
    <property type="entry name" value="FGGY_C"/>
</dbReference>
<dbReference type="InterPro" id="IPR018484">
    <property type="entry name" value="FGGY_N"/>
</dbReference>
<dbReference type="InterPro" id="IPR005999">
    <property type="entry name" value="Glycerol_kin"/>
</dbReference>
<dbReference type="NCBIfam" id="TIGR01311">
    <property type="entry name" value="glycerol_kin"/>
    <property type="match status" value="1"/>
</dbReference>
<dbReference type="NCBIfam" id="NF000756">
    <property type="entry name" value="PRK00047.1"/>
    <property type="match status" value="1"/>
</dbReference>
<dbReference type="PANTHER" id="PTHR10196:SF69">
    <property type="entry name" value="GLYCEROL KINASE"/>
    <property type="match status" value="1"/>
</dbReference>
<dbReference type="PANTHER" id="PTHR10196">
    <property type="entry name" value="SUGAR KINASE"/>
    <property type="match status" value="1"/>
</dbReference>
<dbReference type="Pfam" id="PF02782">
    <property type="entry name" value="FGGY_C"/>
    <property type="match status" value="1"/>
</dbReference>
<dbReference type="Pfam" id="PF00370">
    <property type="entry name" value="FGGY_N"/>
    <property type="match status" value="1"/>
</dbReference>
<dbReference type="PIRSF" id="PIRSF000538">
    <property type="entry name" value="GlpK"/>
    <property type="match status" value="1"/>
</dbReference>
<dbReference type="SUPFAM" id="SSF53067">
    <property type="entry name" value="Actin-like ATPase domain"/>
    <property type="match status" value="2"/>
</dbReference>
<dbReference type="PROSITE" id="PS00933">
    <property type="entry name" value="FGGY_KINASES_1"/>
    <property type="match status" value="1"/>
</dbReference>
<dbReference type="PROSITE" id="PS00445">
    <property type="entry name" value="FGGY_KINASES_2"/>
    <property type="match status" value="1"/>
</dbReference>